<name>Y666_XANAC</name>
<dbReference type="EMBL" id="AE008923">
    <property type="protein sequence ID" value="AAM35555.1"/>
    <property type="molecule type" value="Genomic_DNA"/>
</dbReference>
<dbReference type="RefSeq" id="WP_003482721.1">
    <property type="nucleotide sequence ID" value="NC_003919.1"/>
</dbReference>
<dbReference type="SMR" id="Q8PPM0"/>
<dbReference type="KEGG" id="xac:XAC0666"/>
<dbReference type="eggNOG" id="COG2921">
    <property type="taxonomic scope" value="Bacteria"/>
</dbReference>
<dbReference type="HOGENOM" id="CLU_161438_1_1_6"/>
<dbReference type="Proteomes" id="UP000000576">
    <property type="component" value="Chromosome"/>
</dbReference>
<dbReference type="Gene3D" id="3.30.70.260">
    <property type="match status" value="1"/>
</dbReference>
<dbReference type="HAMAP" id="MF_00659">
    <property type="entry name" value="UPF0250"/>
    <property type="match status" value="1"/>
</dbReference>
<dbReference type="InterPro" id="IPR007454">
    <property type="entry name" value="UPF0250_YbeD-like"/>
</dbReference>
<dbReference type="InterPro" id="IPR027471">
    <property type="entry name" value="YbeD-like_sf"/>
</dbReference>
<dbReference type="NCBIfam" id="NF002066">
    <property type="entry name" value="PRK00907.1"/>
    <property type="match status" value="1"/>
</dbReference>
<dbReference type="Pfam" id="PF04359">
    <property type="entry name" value="DUF493"/>
    <property type="match status" value="1"/>
</dbReference>
<dbReference type="SUPFAM" id="SSF117991">
    <property type="entry name" value="YbeD/HP0495-like"/>
    <property type="match status" value="1"/>
</dbReference>
<feature type="chain" id="PRO_0000209318" description="UPF0250 protein XAC0666">
    <location>
        <begin position="1"/>
        <end position="92"/>
    </location>
</feature>
<organism>
    <name type="scientific">Xanthomonas axonopodis pv. citri (strain 306)</name>
    <dbReference type="NCBI Taxonomy" id="190486"/>
    <lineage>
        <taxon>Bacteria</taxon>
        <taxon>Pseudomonadati</taxon>
        <taxon>Pseudomonadota</taxon>
        <taxon>Gammaproteobacteria</taxon>
        <taxon>Lysobacterales</taxon>
        <taxon>Lysobacteraceae</taxon>
        <taxon>Xanthomonas</taxon>
    </lineage>
</organism>
<sequence length="92" mass="10258">MDISTDNPDHGFQFPGTFELSAMGTAERGLETELPRLLAATGVELLQESVSWKHSSSGKYVSVKIGFRAQSREQFEAAHQALRDHPEVKWTL</sequence>
<proteinExistence type="inferred from homology"/>
<evidence type="ECO:0000255" key="1">
    <source>
        <dbReference type="HAMAP-Rule" id="MF_00659"/>
    </source>
</evidence>
<comment type="similarity">
    <text evidence="1">Belongs to the UPF0250 family.</text>
</comment>
<gene>
    <name type="ordered locus">XAC0666</name>
</gene>
<protein>
    <recommendedName>
        <fullName evidence="1">UPF0250 protein XAC0666</fullName>
    </recommendedName>
</protein>
<accession>Q8PPM0</accession>
<reference key="1">
    <citation type="journal article" date="2002" name="Nature">
        <title>Comparison of the genomes of two Xanthomonas pathogens with differing host specificities.</title>
        <authorList>
            <person name="da Silva A.C.R."/>
            <person name="Ferro J.A."/>
            <person name="Reinach F.C."/>
            <person name="Farah C.S."/>
            <person name="Furlan L.R."/>
            <person name="Quaggio R.B."/>
            <person name="Monteiro-Vitorello C.B."/>
            <person name="Van Sluys M.A."/>
            <person name="Almeida N.F. Jr."/>
            <person name="Alves L.M.C."/>
            <person name="do Amaral A.M."/>
            <person name="Bertolini M.C."/>
            <person name="Camargo L.E.A."/>
            <person name="Camarotte G."/>
            <person name="Cannavan F."/>
            <person name="Cardozo J."/>
            <person name="Chambergo F."/>
            <person name="Ciapina L.P."/>
            <person name="Cicarelli R.M.B."/>
            <person name="Coutinho L.L."/>
            <person name="Cursino-Santos J.R."/>
            <person name="El-Dorry H."/>
            <person name="Faria J.B."/>
            <person name="Ferreira A.J.S."/>
            <person name="Ferreira R.C.C."/>
            <person name="Ferro M.I.T."/>
            <person name="Formighieri E.F."/>
            <person name="Franco M.C."/>
            <person name="Greggio C.C."/>
            <person name="Gruber A."/>
            <person name="Katsuyama A.M."/>
            <person name="Kishi L.T."/>
            <person name="Leite R.P."/>
            <person name="Lemos E.G.M."/>
            <person name="Lemos M.V.F."/>
            <person name="Locali E.C."/>
            <person name="Machado M.A."/>
            <person name="Madeira A.M.B.N."/>
            <person name="Martinez-Rossi N.M."/>
            <person name="Martins E.C."/>
            <person name="Meidanis J."/>
            <person name="Menck C.F.M."/>
            <person name="Miyaki C.Y."/>
            <person name="Moon D.H."/>
            <person name="Moreira L.M."/>
            <person name="Novo M.T.M."/>
            <person name="Okura V.K."/>
            <person name="Oliveira M.C."/>
            <person name="Oliveira V.R."/>
            <person name="Pereira H.A."/>
            <person name="Rossi A."/>
            <person name="Sena J.A.D."/>
            <person name="Silva C."/>
            <person name="de Souza R.F."/>
            <person name="Spinola L.A.F."/>
            <person name="Takita M.A."/>
            <person name="Tamura R.E."/>
            <person name="Teixeira E.C."/>
            <person name="Tezza R.I.D."/>
            <person name="Trindade dos Santos M."/>
            <person name="Truffi D."/>
            <person name="Tsai S.M."/>
            <person name="White F.F."/>
            <person name="Setubal J.C."/>
            <person name="Kitajima J.P."/>
        </authorList>
    </citation>
    <scope>NUCLEOTIDE SEQUENCE [LARGE SCALE GENOMIC DNA]</scope>
    <source>
        <strain>306</strain>
    </source>
</reference>